<keyword id="KW-0067">ATP-binding</keyword>
<keyword id="KW-0963">Cytoplasm</keyword>
<keyword id="KW-0460">Magnesium</keyword>
<keyword id="KW-0479">Metal-binding</keyword>
<keyword id="KW-0547">Nucleotide-binding</keyword>
<keyword id="KW-0554">One-carbon metabolism</keyword>
<keyword id="KW-0630">Potassium</keyword>
<keyword id="KW-1185">Reference proteome</keyword>
<keyword id="KW-0808">Transferase</keyword>
<accession>C1DCT7</accession>
<dbReference type="EC" id="2.5.1.6" evidence="1"/>
<dbReference type="EMBL" id="CP001154">
    <property type="protein sequence ID" value="ACO73572.1"/>
    <property type="molecule type" value="Genomic_DNA"/>
</dbReference>
<dbReference type="RefSeq" id="WP_012696064.1">
    <property type="nucleotide sequence ID" value="NC_012559.1"/>
</dbReference>
<dbReference type="SMR" id="C1DCT7"/>
<dbReference type="STRING" id="557598.LHK_00579"/>
<dbReference type="GeneID" id="75108924"/>
<dbReference type="KEGG" id="lhk:LHK_00579"/>
<dbReference type="eggNOG" id="COG0192">
    <property type="taxonomic scope" value="Bacteria"/>
</dbReference>
<dbReference type="HOGENOM" id="CLU_041802_1_1_4"/>
<dbReference type="UniPathway" id="UPA00315">
    <property type="reaction ID" value="UER00080"/>
</dbReference>
<dbReference type="Proteomes" id="UP000002010">
    <property type="component" value="Chromosome"/>
</dbReference>
<dbReference type="GO" id="GO:0005737">
    <property type="term" value="C:cytoplasm"/>
    <property type="evidence" value="ECO:0007669"/>
    <property type="project" value="UniProtKB-SubCell"/>
</dbReference>
<dbReference type="GO" id="GO:0005524">
    <property type="term" value="F:ATP binding"/>
    <property type="evidence" value="ECO:0007669"/>
    <property type="project" value="UniProtKB-UniRule"/>
</dbReference>
<dbReference type="GO" id="GO:0000287">
    <property type="term" value="F:magnesium ion binding"/>
    <property type="evidence" value="ECO:0007669"/>
    <property type="project" value="UniProtKB-UniRule"/>
</dbReference>
<dbReference type="GO" id="GO:0004478">
    <property type="term" value="F:methionine adenosyltransferase activity"/>
    <property type="evidence" value="ECO:0007669"/>
    <property type="project" value="UniProtKB-UniRule"/>
</dbReference>
<dbReference type="GO" id="GO:0006730">
    <property type="term" value="P:one-carbon metabolic process"/>
    <property type="evidence" value="ECO:0007669"/>
    <property type="project" value="UniProtKB-KW"/>
</dbReference>
<dbReference type="GO" id="GO:0006556">
    <property type="term" value="P:S-adenosylmethionine biosynthetic process"/>
    <property type="evidence" value="ECO:0007669"/>
    <property type="project" value="UniProtKB-UniRule"/>
</dbReference>
<dbReference type="CDD" id="cd18079">
    <property type="entry name" value="S-AdoMet_synt"/>
    <property type="match status" value="1"/>
</dbReference>
<dbReference type="FunFam" id="3.30.300.10:FF:000003">
    <property type="entry name" value="S-adenosylmethionine synthase"/>
    <property type="match status" value="1"/>
</dbReference>
<dbReference type="FunFam" id="3.30.300.10:FF:000004">
    <property type="entry name" value="S-adenosylmethionine synthase"/>
    <property type="match status" value="1"/>
</dbReference>
<dbReference type="Gene3D" id="3.30.300.10">
    <property type="match status" value="3"/>
</dbReference>
<dbReference type="HAMAP" id="MF_00086">
    <property type="entry name" value="S_AdoMet_synth1"/>
    <property type="match status" value="1"/>
</dbReference>
<dbReference type="InterPro" id="IPR022631">
    <property type="entry name" value="ADOMET_SYNTHASE_CS"/>
</dbReference>
<dbReference type="InterPro" id="IPR022630">
    <property type="entry name" value="S-AdoMet_synt_C"/>
</dbReference>
<dbReference type="InterPro" id="IPR022629">
    <property type="entry name" value="S-AdoMet_synt_central"/>
</dbReference>
<dbReference type="InterPro" id="IPR022628">
    <property type="entry name" value="S-AdoMet_synt_N"/>
</dbReference>
<dbReference type="InterPro" id="IPR002133">
    <property type="entry name" value="S-AdoMet_synthetase"/>
</dbReference>
<dbReference type="InterPro" id="IPR022636">
    <property type="entry name" value="S-AdoMet_synthetase_sfam"/>
</dbReference>
<dbReference type="NCBIfam" id="TIGR01034">
    <property type="entry name" value="metK"/>
    <property type="match status" value="1"/>
</dbReference>
<dbReference type="PANTHER" id="PTHR11964">
    <property type="entry name" value="S-ADENOSYLMETHIONINE SYNTHETASE"/>
    <property type="match status" value="1"/>
</dbReference>
<dbReference type="Pfam" id="PF02773">
    <property type="entry name" value="S-AdoMet_synt_C"/>
    <property type="match status" value="1"/>
</dbReference>
<dbReference type="Pfam" id="PF02772">
    <property type="entry name" value="S-AdoMet_synt_M"/>
    <property type="match status" value="1"/>
</dbReference>
<dbReference type="Pfam" id="PF00438">
    <property type="entry name" value="S-AdoMet_synt_N"/>
    <property type="match status" value="1"/>
</dbReference>
<dbReference type="PIRSF" id="PIRSF000497">
    <property type="entry name" value="MAT"/>
    <property type="match status" value="1"/>
</dbReference>
<dbReference type="SUPFAM" id="SSF55973">
    <property type="entry name" value="S-adenosylmethionine synthetase"/>
    <property type="match status" value="3"/>
</dbReference>
<dbReference type="PROSITE" id="PS00376">
    <property type="entry name" value="ADOMET_SYNTHASE_1"/>
    <property type="match status" value="1"/>
</dbReference>
<dbReference type="PROSITE" id="PS00377">
    <property type="entry name" value="ADOMET_SYNTHASE_2"/>
    <property type="match status" value="1"/>
</dbReference>
<sequence>MSEYLFTSESVSEGHPDKVADQISDAILDAILTQDKHARVAAETLVNTGLVVLAGEITTHANVDYIHVARETIKRIGYNTSDLGFDAKGCAVLVGYDKQSPDIAQGVNEGQGIDLNQGAGDQGLMFGYACDETPTLMPFPIYYAHRLVQRQAELRKDGRLPWLRPDAKSQITCAYDSETGLPKRIDTVVLSTQHSPDISHDMLTEAVIEDIVKPVLPAHMLTAETKFLINPTGRFVIGGPMGDCGLTGRKIIVDTYGGAAPHGGGAFSGKDPSKVDRSAAYAGRYVAKNIVAAGLARQCQIQVSYAIGIAEPTSISVDTFGTNAIPNEKIVELVKRHFDLRPKGIIQMLDLLRPIYTKTAAYGHFGREEPEFTWEATDKAAALRADAGL</sequence>
<reference key="1">
    <citation type="journal article" date="2009" name="PLoS Genet.">
        <title>The complete genome and proteome of Laribacter hongkongensis reveal potential mechanisms for adaptations to different temperatures and habitats.</title>
        <authorList>
            <person name="Woo P.C.Y."/>
            <person name="Lau S.K.P."/>
            <person name="Tse H."/>
            <person name="Teng J.L.L."/>
            <person name="Curreem S.O."/>
            <person name="Tsang A.K.L."/>
            <person name="Fan R.Y.Y."/>
            <person name="Wong G.K.M."/>
            <person name="Huang Y."/>
            <person name="Loman N.J."/>
            <person name="Snyder L.A.S."/>
            <person name="Cai J.J."/>
            <person name="Huang J.-D."/>
            <person name="Mak W."/>
            <person name="Pallen M.J."/>
            <person name="Lok S."/>
            <person name="Yuen K.-Y."/>
        </authorList>
    </citation>
    <scope>NUCLEOTIDE SEQUENCE [LARGE SCALE GENOMIC DNA]</scope>
    <source>
        <strain>HLHK9</strain>
    </source>
</reference>
<feature type="chain" id="PRO_1000196716" description="S-adenosylmethionine synthase">
    <location>
        <begin position="1"/>
        <end position="389"/>
    </location>
</feature>
<feature type="region of interest" description="Flexible loop" evidence="1">
    <location>
        <begin position="99"/>
        <end position="109"/>
    </location>
</feature>
<feature type="binding site" description="in other chain" evidence="1">
    <location>
        <position position="15"/>
    </location>
    <ligand>
        <name>ATP</name>
        <dbReference type="ChEBI" id="CHEBI:30616"/>
        <note>ligand shared between two neighboring subunits</note>
    </ligand>
</feature>
<feature type="binding site" evidence="1">
    <location>
        <position position="17"/>
    </location>
    <ligand>
        <name>Mg(2+)</name>
        <dbReference type="ChEBI" id="CHEBI:18420"/>
    </ligand>
</feature>
<feature type="binding site" evidence="1">
    <location>
        <position position="43"/>
    </location>
    <ligand>
        <name>K(+)</name>
        <dbReference type="ChEBI" id="CHEBI:29103"/>
    </ligand>
</feature>
<feature type="binding site" description="in other chain" evidence="1">
    <location>
        <position position="56"/>
    </location>
    <ligand>
        <name>L-methionine</name>
        <dbReference type="ChEBI" id="CHEBI:57844"/>
        <note>ligand shared between two neighboring subunits</note>
    </ligand>
</feature>
<feature type="binding site" description="in other chain" evidence="1">
    <location>
        <position position="99"/>
    </location>
    <ligand>
        <name>L-methionine</name>
        <dbReference type="ChEBI" id="CHEBI:57844"/>
        <note>ligand shared between two neighboring subunits</note>
    </ligand>
</feature>
<feature type="binding site" description="in other chain" evidence="1">
    <location>
        <begin position="166"/>
        <end position="168"/>
    </location>
    <ligand>
        <name>ATP</name>
        <dbReference type="ChEBI" id="CHEBI:30616"/>
        <note>ligand shared between two neighboring subunits</note>
    </ligand>
</feature>
<feature type="binding site" description="in other chain" evidence="1">
    <location>
        <begin position="234"/>
        <end position="235"/>
    </location>
    <ligand>
        <name>ATP</name>
        <dbReference type="ChEBI" id="CHEBI:30616"/>
        <note>ligand shared between two neighboring subunits</note>
    </ligand>
</feature>
<feature type="binding site" evidence="1">
    <location>
        <position position="243"/>
    </location>
    <ligand>
        <name>ATP</name>
        <dbReference type="ChEBI" id="CHEBI:30616"/>
        <note>ligand shared between two neighboring subunits</note>
    </ligand>
</feature>
<feature type="binding site" evidence="1">
    <location>
        <position position="243"/>
    </location>
    <ligand>
        <name>L-methionine</name>
        <dbReference type="ChEBI" id="CHEBI:57844"/>
        <note>ligand shared between two neighboring subunits</note>
    </ligand>
</feature>
<feature type="binding site" description="in other chain" evidence="1">
    <location>
        <begin position="249"/>
        <end position="250"/>
    </location>
    <ligand>
        <name>ATP</name>
        <dbReference type="ChEBI" id="CHEBI:30616"/>
        <note>ligand shared between two neighboring subunits</note>
    </ligand>
</feature>
<feature type="binding site" evidence="1">
    <location>
        <position position="266"/>
    </location>
    <ligand>
        <name>ATP</name>
        <dbReference type="ChEBI" id="CHEBI:30616"/>
        <note>ligand shared between two neighboring subunits</note>
    </ligand>
</feature>
<feature type="binding site" evidence="1">
    <location>
        <position position="270"/>
    </location>
    <ligand>
        <name>ATP</name>
        <dbReference type="ChEBI" id="CHEBI:30616"/>
        <note>ligand shared between two neighboring subunits</note>
    </ligand>
</feature>
<feature type="binding site" description="in other chain" evidence="1">
    <location>
        <position position="274"/>
    </location>
    <ligand>
        <name>L-methionine</name>
        <dbReference type="ChEBI" id="CHEBI:57844"/>
        <note>ligand shared between two neighboring subunits</note>
    </ligand>
</feature>
<organism>
    <name type="scientific">Laribacter hongkongensis (strain HLHK9)</name>
    <dbReference type="NCBI Taxonomy" id="557598"/>
    <lineage>
        <taxon>Bacteria</taxon>
        <taxon>Pseudomonadati</taxon>
        <taxon>Pseudomonadota</taxon>
        <taxon>Betaproteobacteria</taxon>
        <taxon>Neisseriales</taxon>
        <taxon>Aquaspirillaceae</taxon>
        <taxon>Laribacter</taxon>
    </lineage>
</organism>
<protein>
    <recommendedName>
        <fullName evidence="1">S-adenosylmethionine synthase</fullName>
        <shortName evidence="1">AdoMet synthase</shortName>
        <ecNumber evidence="1">2.5.1.6</ecNumber>
    </recommendedName>
    <alternativeName>
        <fullName evidence="1">MAT</fullName>
    </alternativeName>
    <alternativeName>
        <fullName evidence="1">Methionine adenosyltransferase</fullName>
    </alternativeName>
</protein>
<comment type="function">
    <text evidence="1">Catalyzes the formation of S-adenosylmethionine (AdoMet) from methionine and ATP. The overall synthetic reaction is composed of two sequential steps, AdoMet formation and the subsequent tripolyphosphate hydrolysis which occurs prior to release of AdoMet from the enzyme.</text>
</comment>
<comment type="catalytic activity">
    <reaction evidence="1">
        <text>L-methionine + ATP + H2O = S-adenosyl-L-methionine + phosphate + diphosphate</text>
        <dbReference type="Rhea" id="RHEA:21080"/>
        <dbReference type="ChEBI" id="CHEBI:15377"/>
        <dbReference type="ChEBI" id="CHEBI:30616"/>
        <dbReference type="ChEBI" id="CHEBI:33019"/>
        <dbReference type="ChEBI" id="CHEBI:43474"/>
        <dbReference type="ChEBI" id="CHEBI:57844"/>
        <dbReference type="ChEBI" id="CHEBI:59789"/>
        <dbReference type="EC" id="2.5.1.6"/>
    </reaction>
</comment>
<comment type="cofactor">
    <cofactor evidence="1">
        <name>Mg(2+)</name>
        <dbReference type="ChEBI" id="CHEBI:18420"/>
    </cofactor>
    <text evidence="1">Binds 2 divalent ions per subunit.</text>
</comment>
<comment type="cofactor">
    <cofactor evidence="1">
        <name>K(+)</name>
        <dbReference type="ChEBI" id="CHEBI:29103"/>
    </cofactor>
    <text evidence="1">Binds 1 potassium ion per subunit.</text>
</comment>
<comment type="pathway">
    <text evidence="1">Amino-acid biosynthesis; S-adenosyl-L-methionine biosynthesis; S-adenosyl-L-methionine from L-methionine: step 1/1.</text>
</comment>
<comment type="subunit">
    <text evidence="1">Homotetramer; dimer of dimers.</text>
</comment>
<comment type="subcellular location">
    <subcellularLocation>
        <location evidence="1">Cytoplasm</location>
    </subcellularLocation>
</comment>
<comment type="similarity">
    <text evidence="1">Belongs to the AdoMet synthase family.</text>
</comment>
<gene>
    <name evidence="1" type="primary">metK</name>
    <name type="ordered locus">LHK_00579</name>
</gene>
<proteinExistence type="inferred from homology"/>
<evidence type="ECO:0000255" key="1">
    <source>
        <dbReference type="HAMAP-Rule" id="MF_00086"/>
    </source>
</evidence>
<name>METK_LARHH</name>